<evidence type="ECO:0000250" key="1"/>
<evidence type="ECO:0000255" key="2">
    <source>
        <dbReference type="HAMAP-Rule" id="MF_00091"/>
    </source>
</evidence>
<proteinExistence type="inferred from homology"/>
<keyword id="KW-0071">Autoinducer synthesis</keyword>
<keyword id="KW-0408">Iron</keyword>
<keyword id="KW-0456">Lyase</keyword>
<keyword id="KW-0479">Metal-binding</keyword>
<keyword id="KW-0673">Quorum sensing</keyword>
<keyword id="KW-1185">Reference proteome</keyword>
<protein>
    <recommendedName>
        <fullName evidence="2">S-ribosylhomocysteine lyase</fullName>
        <ecNumber evidence="2">4.4.1.21</ecNumber>
    </recommendedName>
    <alternativeName>
        <fullName evidence="2">AI-2 synthesis protein</fullName>
    </alternativeName>
    <alternativeName>
        <fullName evidence="2">Autoinducer-2 production protein LuxS</fullName>
    </alternativeName>
</protein>
<dbReference type="EC" id="4.4.1.21" evidence="2"/>
<dbReference type="EMBL" id="AE003852">
    <property type="protein sequence ID" value="AAF93725.1"/>
    <property type="molecule type" value="Genomic_DNA"/>
</dbReference>
<dbReference type="PIR" id="F82309">
    <property type="entry name" value="F82309"/>
</dbReference>
<dbReference type="RefSeq" id="NP_230208.1">
    <property type="nucleotide sequence ID" value="NC_002505.1"/>
</dbReference>
<dbReference type="RefSeq" id="WP_001130227.1">
    <property type="nucleotide sequence ID" value="NZ_LT906614.1"/>
</dbReference>
<dbReference type="SMR" id="Q9KUG4"/>
<dbReference type="STRING" id="243277.VC_0557"/>
<dbReference type="DNASU" id="2615234"/>
<dbReference type="EnsemblBacteria" id="AAF93725">
    <property type="protein sequence ID" value="AAF93725"/>
    <property type="gene ID" value="VC_0557"/>
</dbReference>
<dbReference type="GeneID" id="69720681"/>
<dbReference type="KEGG" id="vch:VC_0557"/>
<dbReference type="PATRIC" id="fig|243277.26.peg.532"/>
<dbReference type="eggNOG" id="COG1854">
    <property type="taxonomic scope" value="Bacteria"/>
</dbReference>
<dbReference type="HOGENOM" id="CLU_107531_2_0_6"/>
<dbReference type="BRENDA" id="4.4.1.21">
    <property type="organism ID" value="6626"/>
</dbReference>
<dbReference type="Proteomes" id="UP000000584">
    <property type="component" value="Chromosome 1"/>
</dbReference>
<dbReference type="GO" id="GO:0005829">
    <property type="term" value="C:cytosol"/>
    <property type="evidence" value="ECO:0000318"/>
    <property type="project" value="GO_Central"/>
</dbReference>
<dbReference type="GO" id="GO:0005506">
    <property type="term" value="F:iron ion binding"/>
    <property type="evidence" value="ECO:0007669"/>
    <property type="project" value="InterPro"/>
</dbReference>
<dbReference type="GO" id="GO:0043768">
    <property type="term" value="F:S-ribosylhomocysteine lyase activity"/>
    <property type="evidence" value="ECO:0000318"/>
    <property type="project" value="GO_Central"/>
</dbReference>
<dbReference type="GO" id="GO:0019284">
    <property type="term" value="P:L-methionine salvage from S-adenosylmethionine"/>
    <property type="evidence" value="ECO:0000318"/>
    <property type="project" value="GO_Central"/>
</dbReference>
<dbReference type="GO" id="GO:0009372">
    <property type="term" value="P:quorum sensing"/>
    <property type="evidence" value="ECO:0007669"/>
    <property type="project" value="UniProtKB-UniRule"/>
</dbReference>
<dbReference type="FunFam" id="3.30.1360.80:FF:000001">
    <property type="entry name" value="S-ribosylhomocysteine lyase"/>
    <property type="match status" value="1"/>
</dbReference>
<dbReference type="Gene3D" id="3.30.1360.80">
    <property type="entry name" value="S-ribosylhomocysteinase (LuxS)"/>
    <property type="match status" value="1"/>
</dbReference>
<dbReference type="HAMAP" id="MF_00091">
    <property type="entry name" value="LuxS"/>
    <property type="match status" value="1"/>
</dbReference>
<dbReference type="InterPro" id="IPR037005">
    <property type="entry name" value="LuxS_sf"/>
</dbReference>
<dbReference type="InterPro" id="IPR011249">
    <property type="entry name" value="Metalloenz_LuxS/M16"/>
</dbReference>
<dbReference type="InterPro" id="IPR003815">
    <property type="entry name" value="S-ribosylhomocysteinase"/>
</dbReference>
<dbReference type="NCBIfam" id="NF002602">
    <property type="entry name" value="PRK02260.1-2"/>
    <property type="match status" value="1"/>
</dbReference>
<dbReference type="PANTHER" id="PTHR35799">
    <property type="entry name" value="S-RIBOSYLHOMOCYSTEINE LYASE"/>
    <property type="match status" value="1"/>
</dbReference>
<dbReference type="PANTHER" id="PTHR35799:SF1">
    <property type="entry name" value="S-RIBOSYLHOMOCYSTEINE LYASE"/>
    <property type="match status" value="1"/>
</dbReference>
<dbReference type="Pfam" id="PF02664">
    <property type="entry name" value="LuxS"/>
    <property type="match status" value="1"/>
</dbReference>
<dbReference type="PIRSF" id="PIRSF006160">
    <property type="entry name" value="AI2"/>
    <property type="match status" value="1"/>
</dbReference>
<dbReference type="PRINTS" id="PR01487">
    <property type="entry name" value="LUXSPROTEIN"/>
</dbReference>
<dbReference type="SUPFAM" id="SSF63411">
    <property type="entry name" value="LuxS/MPP-like metallohydrolase"/>
    <property type="match status" value="1"/>
</dbReference>
<reference key="1">
    <citation type="journal article" date="2000" name="Nature">
        <title>DNA sequence of both chromosomes of the cholera pathogen Vibrio cholerae.</title>
        <authorList>
            <person name="Heidelberg J.F."/>
            <person name="Eisen J.A."/>
            <person name="Nelson W.C."/>
            <person name="Clayton R.A."/>
            <person name="Gwinn M.L."/>
            <person name="Dodson R.J."/>
            <person name="Haft D.H."/>
            <person name="Hickey E.K."/>
            <person name="Peterson J.D."/>
            <person name="Umayam L.A."/>
            <person name="Gill S.R."/>
            <person name="Nelson K.E."/>
            <person name="Read T.D."/>
            <person name="Tettelin H."/>
            <person name="Richardson D.L."/>
            <person name="Ermolaeva M.D."/>
            <person name="Vamathevan J.J."/>
            <person name="Bass S."/>
            <person name="Qin H."/>
            <person name="Dragoi I."/>
            <person name="Sellers P."/>
            <person name="McDonald L.A."/>
            <person name="Utterback T.R."/>
            <person name="Fleischmann R.D."/>
            <person name="Nierman W.C."/>
            <person name="White O."/>
            <person name="Salzberg S.L."/>
            <person name="Smith H.O."/>
            <person name="Colwell R.R."/>
            <person name="Mekalanos J.J."/>
            <person name="Venter J.C."/>
            <person name="Fraser C.M."/>
        </authorList>
    </citation>
    <scope>NUCLEOTIDE SEQUENCE [LARGE SCALE GENOMIC DNA]</scope>
    <source>
        <strain>ATCC 39315 / El Tor Inaba N16961</strain>
    </source>
</reference>
<organism>
    <name type="scientific">Vibrio cholerae serotype O1 (strain ATCC 39315 / El Tor Inaba N16961)</name>
    <dbReference type="NCBI Taxonomy" id="243277"/>
    <lineage>
        <taxon>Bacteria</taxon>
        <taxon>Pseudomonadati</taxon>
        <taxon>Pseudomonadota</taxon>
        <taxon>Gammaproteobacteria</taxon>
        <taxon>Vibrionales</taxon>
        <taxon>Vibrionaceae</taxon>
        <taxon>Vibrio</taxon>
    </lineage>
</organism>
<gene>
    <name evidence="2" type="primary">luxS</name>
    <name type="ordered locus">VC_0557</name>
</gene>
<accession>Q9KUG4</accession>
<name>LUXS_VIBCH</name>
<feature type="initiator methionine" description="Removed" evidence="1">
    <location>
        <position position="1"/>
    </location>
</feature>
<feature type="chain" id="PRO_0000172274" description="S-ribosylhomocysteine lyase">
    <location>
        <begin position="2"/>
        <end position="172"/>
    </location>
</feature>
<feature type="binding site" evidence="2">
    <location>
        <position position="54"/>
    </location>
    <ligand>
        <name>Fe cation</name>
        <dbReference type="ChEBI" id="CHEBI:24875"/>
    </ligand>
</feature>
<feature type="binding site" evidence="2">
    <location>
        <position position="58"/>
    </location>
    <ligand>
        <name>Fe cation</name>
        <dbReference type="ChEBI" id="CHEBI:24875"/>
    </ligand>
</feature>
<feature type="binding site" evidence="2">
    <location>
        <position position="128"/>
    </location>
    <ligand>
        <name>Fe cation</name>
        <dbReference type="ChEBI" id="CHEBI:24875"/>
    </ligand>
</feature>
<comment type="function">
    <text evidence="2">Involved in the synthesis of autoinducer 2 (AI-2) which is secreted by bacteria and is used to communicate both the cell density and the metabolic potential of the environment. The regulation of gene expression in response to changes in cell density is called quorum sensing. Catalyzes the transformation of S-ribosylhomocysteine (RHC) to homocysteine (HC) and 4,5-dihydroxy-2,3-pentadione (DPD).</text>
</comment>
<comment type="catalytic activity">
    <reaction evidence="2">
        <text>S-(5-deoxy-D-ribos-5-yl)-L-homocysteine = (S)-4,5-dihydroxypentane-2,3-dione + L-homocysteine</text>
        <dbReference type="Rhea" id="RHEA:17753"/>
        <dbReference type="ChEBI" id="CHEBI:29484"/>
        <dbReference type="ChEBI" id="CHEBI:58195"/>
        <dbReference type="ChEBI" id="CHEBI:58199"/>
        <dbReference type="EC" id="4.4.1.21"/>
    </reaction>
</comment>
<comment type="cofactor">
    <cofactor evidence="2">
        <name>Fe cation</name>
        <dbReference type="ChEBI" id="CHEBI:24875"/>
    </cofactor>
    <text evidence="2">Binds 1 Fe cation per subunit.</text>
</comment>
<comment type="subunit">
    <text evidence="2">Homodimer.</text>
</comment>
<comment type="similarity">
    <text evidence="2">Belongs to the LuxS family.</text>
</comment>
<sequence length="172" mass="19081">MPLLDSFTVDHTRMNAPAVRVAKTMQTPKGDTITVFDLRFTMPNKDILSERGIHTLEHLYAGFMRNHLNGSQVEIIDISPMGCRTGFYMSLIGAPTEQQVAQAWLAAMQDVLKVESQEQIPELNEYQCGTAAMHSLEEAKAIAKNVIAAGISVNRNDELALPESMLNELKVH</sequence>